<feature type="chain" id="PRO_1000200550" description="UvrABC system protein B">
    <location>
        <begin position="1"/>
        <end position="664"/>
    </location>
</feature>
<feature type="domain" description="Helicase ATP-binding" evidence="1">
    <location>
        <begin position="25"/>
        <end position="182"/>
    </location>
</feature>
<feature type="domain" description="Helicase C-terminal" evidence="1">
    <location>
        <begin position="429"/>
        <end position="595"/>
    </location>
</feature>
<feature type="domain" description="UVR" evidence="1">
    <location>
        <begin position="625"/>
        <end position="660"/>
    </location>
</feature>
<feature type="short sequence motif" description="Beta-hairpin">
    <location>
        <begin position="91"/>
        <end position="114"/>
    </location>
</feature>
<feature type="binding site" evidence="1">
    <location>
        <begin position="38"/>
        <end position="45"/>
    </location>
    <ligand>
        <name>ATP</name>
        <dbReference type="ChEBI" id="CHEBI:30616"/>
    </ligand>
</feature>
<evidence type="ECO:0000255" key="1">
    <source>
        <dbReference type="HAMAP-Rule" id="MF_00204"/>
    </source>
</evidence>
<comment type="function">
    <text evidence="1">The UvrABC repair system catalyzes the recognition and processing of DNA lesions. A damage recognition complex composed of 2 UvrA and 2 UvrB subunits scans DNA for abnormalities. Upon binding of the UvrA(2)B(2) complex to a putative damaged site, the DNA wraps around one UvrB monomer. DNA wrap is dependent on ATP binding by UvrB and probably causes local melting of the DNA helix, facilitating insertion of UvrB beta-hairpin between the DNA strands. Then UvrB probes one DNA strand for the presence of a lesion. If a lesion is found the UvrA subunits dissociate and the UvrB-DNA preincision complex is formed. This complex is subsequently bound by UvrC and the second UvrB is released. If no lesion is found, the DNA wraps around the other UvrB subunit that will check the other stand for damage.</text>
</comment>
<comment type="subunit">
    <text evidence="1">Forms a heterotetramer with UvrA during the search for lesions. Interacts with UvrC in an incision complex.</text>
</comment>
<comment type="subcellular location">
    <subcellularLocation>
        <location evidence="1">Cytoplasm</location>
    </subcellularLocation>
</comment>
<comment type="domain">
    <text evidence="1">The beta-hairpin motif is involved in DNA binding.</text>
</comment>
<comment type="similarity">
    <text evidence="1">Belongs to the UvrB family.</text>
</comment>
<keyword id="KW-0067">ATP-binding</keyword>
<keyword id="KW-0963">Cytoplasm</keyword>
<keyword id="KW-0227">DNA damage</keyword>
<keyword id="KW-0228">DNA excision</keyword>
<keyword id="KW-0234">DNA repair</keyword>
<keyword id="KW-0267">Excision nuclease</keyword>
<keyword id="KW-0347">Helicase</keyword>
<keyword id="KW-0378">Hydrolase</keyword>
<keyword id="KW-0547">Nucleotide-binding</keyword>
<keyword id="KW-1185">Reference proteome</keyword>
<keyword id="KW-0742">SOS response</keyword>
<sequence>MANFKMVSPFKAAGDQVKAIENIAKSFGEGKNKITLVGVTGSGKTFTMAEVITRVKKPTLILSHNKTLAAQLFREFKEFFPENAVEYFVSYYDYYQPEAYVPSSDTFIEKDMSMNEEIDKLRLRATSSLLERDDVIIVSSVSCIYGLGSPEDYMNSVVMLQVGDKIDRDQIIRKFLHIQYARNDIDFSRGNFRVRGDTIEIMPSYQEEGIRIELFGDEIDGLSKIDPLTGKVKIKLDRVVVYPAKHFITSGPKIKDAMEKIKEEMAAQKEYFLKQGKHLEAERIESRTNYDMEMLLELGYCSGIENYSRHLTGRAEGERPACLLDYFPGKDFLLIIDESHVTLPQIGGMYAGDRSRKQTLVEFGFRLPSALDNRPLNFTEFEAMTPRTLYVSATPDQNELNKSEAVFEQIIRPTGLLDPVVEVRPTTNQIEDLLNEIRLRINQKERVLITTLTKKMSEDLTDYYKEVGLKIAYLHSEIDTIERTEIIRDLRKGVYDCIVGINLLREGLDIPEVSLVAILDADKEGFLRNYKSLVQTIGRAARNVNGKAILYADRMTDSIKKAMSETERRRLIQEAHNEKMGITPQTIQKEIHDILPREMAEEDSKEEALKDLEKEFTLKKYKTKDKLREALKREMLRYANDMDFEKAAMFRDKMLALGPDKIET</sequence>
<protein>
    <recommendedName>
        <fullName evidence="1">UvrABC system protein B</fullName>
        <shortName evidence="1">Protein UvrB</shortName>
    </recommendedName>
    <alternativeName>
        <fullName evidence="1">Excinuclease ABC subunit B</fullName>
    </alternativeName>
</protein>
<accession>B0SLS0</accession>
<name>UVRB_LEPBP</name>
<dbReference type="EMBL" id="CP000786">
    <property type="protein sequence ID" value="ABZ96972.1"/>
    <property type="molecule type" value="Genomic_DNA"/>
</dbReference>
<dbReference type="RefSeq" id="WP_012387856.1">
    <property type="nucleotide sequence ID" value="NC_010602.1"/>
</dbReference>
<dbReference type="SMR" id="B0SLS0"/>
<dbReference type="STRING" id="456481.LEPBI_I0845"/>
<dbReference type="KEGG" id="lbi:LEPBI_I0845"/>
<dbReference type="HOGENOM" id="CLU_009621_2_1_12"/>
<dbReference type="OrthoDB" id="9806651at2"/>
<dbReference type="BioCyc" id="LBIF456481:LEPBI_RS04145-MONOMER"/>
<dbReference type="Proteomes" id="UP000001847">
    <property type="component" value="Chromosome I"/>
</dbReference>
<dbReference type="GO" id="GO:0005737">
    <property type="term" value="C:cytoplasm"/>
    <property type="evidence" value="ECO:0007669"/>
    <property type="project" value="UniProtKB-SubCell"/>
</dbReference>
<dbReference type="GO" id="GO:0009380">
    <property type="term" value="C:excinuclease repair complex"/>
    <property type="evidence" value="ECO:0007669"/>
    <property type="project" value="InterPro"/>
</dbReference>
<dbReference type="GO" id="GO:0005524">
    <property type="term" value="F:ATP binding"/>
    <property type="evidence" value="ECO:0007669"/>
    <property type="project" value="UniProtKB-UniRule"/>
</dbReference>
<dbReference type="GO" id="GO:0016887">
    <property type="term" value="F:ATP hydrolysis activity"/>
    <property type="evidence" value="ECO:0007669"/>
    <property type="project" value="InterPro"/>
</dbReference>
<dbReference type="GO" id="GO:0003677">
    <property type="term" value="F:DNA binding"/>
    <property type="evidence" value="ECO:0007669"/>
    <property type="project" value="UniProtKB-UniRule"/>
</dbReference>
<dbReference type="GO" id="GO:0009381">
    <property type="term" value="F:excinuclease ABC activity"/>
    <property type="evidence" value="ECO:0007669"/>
    <property type="project" value="UniProtKB-UniRule"/>
</dbReference>
<dbReference type="GO" id="GO:0004386">
    <property type="term" value="F:helicase activity"/>
    <property type="evidence" value="ECO:0007669"/>
    <property type="project" value="UniProtKB-KW"/>
</dbReference>
<dbReference type="GO" id="GO:0006289">
    <property type="term" value="P:nucleotide-excision repair"/>
    <property type="evidence" value="ECO:0007669"/>
    <property type="project" value="UniProtKB-UniRule"/>
</dbReference>
<dbReference type="GO" id="GO:0009432">
    <property type="term" value="P:SOS response"/>
    <property type="evidence" value="ECO:0007669"/>
    <property type="project" value="UniProtKB-UniRule"/>
</dbReference>
<dbReference type="CDD" id="cd17916">
    <property type="entry name" value="DEXHc_UvrB"/>
    <property type="match status" value="1"/>
</dbReference>
<dbReference type="CDD" id="cd18790">
    <property type="entry name" value="SF2_C_UvrB"/>
    <property type="match status" value="1"/>
</dbReference>
<dbReference type="Gene3D" id="3.40.50.300">
    <property type="entry name" value="P-loop containing nucleotide triphosphate hydrolases"/>
    <property type="match status" value="3"/>
</dbReference>
<dbReference type="Gene3D" id="4.10.860.10">
    <property type="entry name" value="UVR domain"/>
    <property type="match status" value="1"/>
</dbReference>
<dbReference type="HAMAP" id="MF_00204">
    <property type="entry name" value="UvrB"/>
    <property type="match status" value="1"/>
</dbReference>
<dbReference type="InterPro" id="IPR006935">
    <property type="entry name" value="Helicase/UvrB_N"/>
</dbReference>
<dbReference type="InterPro" id="IPR014001">
    <property type="entry name" value="Helicase_ATP-bd"/>
</dbReference>
<dbReference type="InterPro" id="IPR001650">
    <property type="entry name" value="Helicase_C-like"/>
</dbReference>
<dbReference type="InterPro" id="IPR027417">
    <property type="entry name" value="P-loop_NTPase"/>
</dbReference>
<dbReference type="InterPro" id="IPR001943">
    <property type="entry name" value="UVR_dom"/>
</dbReference>
<dbReference type="InterPro" id="IPR036876">
    <property type="entry name" value="UVR_dom_sf"/>
</dbReference>
<dbReference type="InterPro" id="IPR004807">
    <property type="entry name" value="UvrB"/>
</dbReference>
<dbReference type="InterPro" id="IPR041471">
    <property type="entry name" value="UvrB_inter"/>
</dbReference>
<dbReference type="InterPro" id="IPR024759">
    <property type="entry name" value="UvrB_YAD/RRR_dom"/>
</dbReference>
<dbReference type="NCBIfam" id="NF003673">
    <property type="entry name" value="PRK05298.1"/>
    <property type="match status" value="1"/>
</dbReference>
<dbReference type="NCBIfam" id="TIGR00631">
    <property type="entry name" value="uvrb"/>
    <property type="match status" value="1"/>
</dbReference>
<dbReference type="PANTHER" id="PTHR24029">
    <property type="entry name" value="UVRABC SYSTEM PROTEIN B"/>
    <property type="match status" value="1"/>
</dbReference>
<dbReference type="PANTHER" id="PTHR24029:SF0">
    <property type="entry name" value="UVRABC SYSTEM PROTEIN B"/>
    <property type="match status" value="1"/>
</dbReference>
<dbReference type="Pfam" id="PF00271">
    <property type="entry name" value="Helicase_C"/>
    <property type="match status" value="1"/>
</dbReference>
<dbReference type="Pfam" id="PF04851">
    <property type="entry name" value="ResIII"/>
    <property type="match status" value="1"/>
</dbReference>
<dbReference type="Pfam" id="PF02151">
    <property type="entry name" value="UVR"/>
    <property type="match status" value="1"/>
</dbReference>
<dbReference type="Pfam" id="PF12344">
    <property type="entry name" value="UvrB"/>
    <property type="match status" value="1"/>
</dbReference>
<dbReference type="Pfam" id="PF17757">
    <property type="entry name" value="UvrB_inter"/>
    <property type="match status" value="1"/>
</dbReference>
<dbReference type="SMART" id="SM00487">
    <property type="entry name" value="DEXDc"/>
    <property type="match status" value="1"/>
</dbReference>
<dbReference type="SMART" id="SM00490">
    <property type="entry name" value="HELICc"/>
    <property type="match status" value="1"/>
</dbReference>
<dbReference type="SUPFAM" id="SSF46600">
    <property type="entry name" value="C-terminal UvrC-binding domain of UvrB"/>
    <property type="match status" value="1"/>
</dbReference>
<dbReference type="SUPFAM" id="SSF52540">
    <property type="entry name" value="P-loop containing nucleoside triphosphate hydrolases"/>
    <property type="match status" value="2"/>
</dbReference>
<dbReference type="PROSITE" id="PS51192">
    <property type="entry name" value="HELICASE_ATP_BIND_1"/>
    <property type="match status" value="1"/>
</dbReference>
<dbReference type="PROSITE" id="PS51194">
    <property type="entry name" value="HELICASE_CTER"/>
    <property type="match status" value="1"/>
</dbReference>
<dbReference type="PROSITE" id="PS50151">
    <property type="entry name" value="UVR"/>
    <property type="match status" value="1"/>
</dbReference>
<organism>
    <name type="scientific">Leptospira biflexa serovar Patoc (strain Patoc 1 / ATCC 23582 / Paris)</name>
    <dbReference type="NCBI Taxonomy" id="456481"/>
    <lineage>
        <taxon>Bacteria</taxon>
        <taxon>Pseudomonadati</taxon>
        <taxon>Spirochaetota</taxon>
        <taxon>Spirochaetia</taxon>
        <taxon>Leptospirales</taxon>
        <taxon>Leptospiraceae</taxon>
        <taxon>Leptospira</taxon>
    </lineage>
</organism>
<proteinExistence type="inferred from homology"/>
<gene>
    <name evidence="1" type="primary">uvrB</name>
    <name type="ordered locus">LEPBI_I0845</name>
</gene>
<reference key="1">
    <citation type="journal article" date="2008" name="PLoS ONE">
        <title>Genome sequence of the saprophyte Leptospira biflexa provides insights into the evolution of Leptospira and the pathogenesis of leptospirosis.</title>
        <authorList>
            <person name="Picardeau M."/>
            <person name="Bulach D.M."/>
            <person name="Bouchier C."/>
            <person name="Zuerner R.L."/>
            <person name="Zidane N."/>
            <person name="Wilson P.J."/>
            <person name="Creno S."/>
            <person name="Kuczek E.S."/>
            <person name="Bommezzadri S."/>
            <person name="Davis J.C."/>
            <person name="McGrath A."/>
            <person name="Johnson M.J."/>
            <person name="Boursaux-Eude C."/>
            <person name="Seemann T."/>
            <person name="Rouy Z."/>
            <person name="Coppel R.L."/>
            <person name="Rood J.I."/>
            <person name="Lajus A."/>
            <person name="Davies J.K."/>
            <person name="Medigue C."/>
            <person name="Adler B."/>
        </authorList>
    </citation>
    <scope>NUCLEOTIDE SEQUENCE [LARGE SCALE GENOMIC DNA]</scope>
    <source>
        <strain>Patoc 1 / ATCC 23582 / Paris</strain>
    </source>
</reference>